<proteinExistence type="evidence at protein level"/>
<evidence type="ECO:0000250" key="1">
    <source>
        <dbReference type="UniProtKB" id="A0S865"/>
    </source>
</evidence>
<evidence type="ECO:0000255" key="2"/>
<evidence type="ECO:0000269" key="3">
    <source>
    </source>
</evidence>
<evidence type="ECO:0000303" key="4">
    <source>
    </source>
</evidence>
<evidence type="ECO:0000305" key="5"/>
<evidence type="ECO:0000305" key="6">
    <source>
    </source>
</evidence>
<evidence type="ECO:0000312" key="7">
    <source>
        <dbReference type="EMBL" id="AXL95293.1"/>
    </source>
</evidence>
<evidence type="ECO:0000312" key="8">
    <source>
        <dbReference type="EMBL" id="AXL95300.1"/>
    </source>
</evidence>
<keyword id="KW-1015">Disulfide bond</keyword>
<keyword id="KW-0528">Neurotoxin</keyword>
<keyword id="KW-0964">Secreted</keyword>
<keyword id="KW-0732">Signal</keyword>
<keyword id="KW-0800">Toxin</keyword>
<protein>
    <recommendedName>
        <fullName evidence="4">Sulmotoxin 2</fullName>
    </recommendedName>
    <alternativeName>
        <fullName evidence="4">S.sulphureus monomeric toxin 2</fullName>
    </alternativeName>
    <alternativeName>
        <fullName evidence="8">Three-finger toxin 11</fullName>
    </alternativeName>
    <alternativeName>
        <fullName evidence="7">Three-finger toxin 14</fullName>
    </alternativeName>
</protein>
<sequence length="86" mass="9879">MKTLLLALAVVAFMCLDSVYPLNCFQCNRETWWKCSEAKRCRLGNKCYNLYNSDGKWTVKGCAQTCPTAGPDERVKCCYISECNRY</sequence>
<accession>A0A346CIB0</accession>
<accession>A0A346CIB7</accession>
<dbReference type="EMBL" id="MH233110">
    <property type="protein sequence ID" value="AXL95293.1"/>
    <property type="molecule type" value="mRNA"/>
</dbReference>
<dbReference type="EMBL" id="MH233117">
    <property type="protein sequence ID" value="AXL95300.1"/>
    <property type="molecule type" value="mRNA"/>
</dbReference>
<dbReference type="SMR" id="A0A346CIB0"/>
<dbReference type="GO" id="GO:0005576">
    <property type="term" value="C:extracellular region"/>
    <property type="evidence" value="ECO:0007669"/>
    <property type="project" value="UniProtKB-SubCell"/>
</dbReference>
<dbReference type="GO" id="GO:0090729">
    <property type="term" value="F:toxin activity"/>
    <property type="evidence" value="ECO:0007669"/>
    <property type="project" value="UniProtKB-KW"/>
</dbReference>
<dbReference type="CDD" id="cd00206">
    <property type="entry name" value="TFP_snake_toxin"/>
    <property type="match status" value="1"/>
</dbReference>
<dbReference type="Gene3D" id="2.10.60.10">
    <property type="entry name" value="CD59"/>
    <property type="match status" value="1"/>
</dbReference>
<dbReference type="InterPro" id="IPR003571">
    <property type="entry name" value="Snake_3FTx"/>
</dbReference>
<dbReference type="InterPro" id="IPR045860">
    <property type="entry name" value="Snake_toxin-like_sf"/>
</dbReference>
<dbReference type="InterPro" id="IPR054131">
    <property type="entry name" value="Toxin_cobra-type"/>
</dbReference>
<dbReference type="Pfam" id="PF21947">
    <property type="entry name" value="Toxin_cobra-type"/>
    <property type="match status" value="1"/>
</dbReference>
<dbReference type="SUPFAM" id="SSF57302">
    <property type="entry name" value="Snake toxin-like"/>
    <property type="match status" value="1"/>
</dbReference>
<name>3NB2_SPISL</name>
<organism>
    <name type="scientific">Spilotes sulphureus</name>
    <name type="common">Amazon puffing snake</name>
    <name type="synonym">Natrix sulphurea</name>
    <dbReference type="NCBI Taxonomy" id="1899469"/>
    <lineage>
        <taxon>Eukaryota</taxon>
        <taxon>Metazoa</taxon>
        <taxon>Chordata</taxon>
        <taxon>Craniata</taxon>
        <taxon>Vertebrata</taxon>
        <taxon>Euteleostomi</taxon>
        <taxon>Lepidosauria</taxon>
        <taxon>Squamata</taxon>
        <taxon>Bifurcata</taxon>
        <taxon>Unidentata</taxon>
        <taxon>Episquamata</taxon>
        <taxon>Toxicofera</taxon>
        <taxon>Serpentes</taxon>
        <taxon>Colubroidea</taxon>
        <taxon>Colubridae</taxon>
        <taxon>Colubrinae</taxon>
        <taxon>Spilotes</taxon>
    </lineage>
</organism>
<comment type="function">
    <text evidence="3">Probable neurotoxin. Is not toxic to mice and geckos.</text>
</comment>
<comment type="subunit">
    <text evidence="3">Monomer.</text>
</comment>
<comment type="subcellular location">
    <subcellularLocation>
        <location evidence="3">Secreted</location>
    </subcellularLocation>
</comment>
<comment type="tissue specificity">
    <text evidence="6">Expressed by the venom gland.</text>
</comment>
<comment type="similarity">
    <text evidence="5">Belongs to the three-finger toxin family. Ancestral subfamily. Boigatoxin sub-subfamily.</text>
</comment>
<feature type="signal peptide" evidence="2">
    <location>
        <begin position="1"/>
        <end position="21"/>
    </location>
</feature>
<feature type="chain" id="PRO_5017031096" description="Sulmotoxin 2" evidence="5">
    <location>
        <begin position="22"/>
        <end position="86"/>
    </location>
</feature>
<feature type="disulfide bond" evidence="1">
    <location>
        <begin position="24"/>
        <end position="47"/>
    </location>
</feature>
<feature type="disulfide bond" evidence="1">
    <location>
        <begin position="27"/>
        <end position="35"/>
    </location>
</feature>
<feature type="disulfide bond" evidence="1">
    <location>
        <begin position="41"/>
        <end position="62"/>
    </location>
</feature>
<feature type="disulfide bond" evidence="1">
    <location>
        <begin position="66"/>
        <end position="77"/>
    </location>
</feature>
<feature type="disulfide bond" evidence="1">
    <location>
        <begin position="78"/>
        <end position="83"/>
    </location>
</feature>
<feature type="sequence conflict" description="In Ref. 1; AXL95300." evidence="5" ref="1">
    <original>I</original>
    <variation>T</variation>
    <location>
        <position position="80"/>
    </location>
</feature>
<reference evidence="7 8" key="1">
    <citation type="journal article" date="2018" name="Proc. R. Soc. B">
        <title>Adaptive evolution of distinct prey-specific toxin genes in rear-fanged snake venom.</title>
        <authorList>
            <person name="Modahl C.M."/>
            <person name="Mrinalini F.S."/>
            <person name="Mackessy S.P."/>
        </authorList>
    </citation>
    <scope>NUCLEOTIDE SEQUENCE [MRNA]</scope>
    <scope>FUNCTION</scope>
    <scope>SUBCELLULAR LOCATION</scope>
    <scope>SUBUNIT</scope>
    <scope>BIOASSAY</scope>
    <source>
        <tissue>Venom</tissue>
        <tissue>Venom gland</tissue>
    </source>
</reference>
<reference key="2">
    <citation type="journal article" date="2018" name="Proc. R. Soc. B">
        <authorList>
            <person name="Modahl C.M."/>
            <person name="Mrinalini F.S."/>
            <person name="Mackessy S.P."/>
        </authorList>
    </citation>
    <scope>ERRATUM OF PUBMED:30068680</scope>
</reference>